<name>Y3010_ECOL5</name>
<accession>Q0TDI6</accession>
<accession>Q707F7</accession>
<organism>
    <name type="scientific">Escherichia coli O6:K15:H31 (strain 536 / UPEC)</name>
    <dbReference type="NCBI Taxonomy" id="362663"/>
    <lineage>
        <taxon>Bacteria</taxon>
        <taxon>Pseudomonadati</taxon>
        <taxon>Pseudomonadota</taxon>
        <taxon>Gammaproteobacteria</taxon>
        <taxon>Enterobacterales</taxon>
        <taxon>Enterobacteriaceae</taxon>
        <taxon>Escherichia</taxon>
    </lineage>
</organism>
<comment type="similarity">
    <text evidence="1">Belongs to the UPF0401 family.</text>
</comment>
<comment type="sequence caution" evidence="1">
    <conflict type="erroneous initiation">
        <sequence resource="EMBL-CDS" id="CAE85198"/>
    </conflict>
</comment>
<feature type="chain" id="PRO_0000268749" description="UPF0401 protein ECP_3010">
    <location>
        <begin position="1"/>
        <end position="77"/>
    </location>
</feature>
<dbReference type="EMBL" id="AJ617685">
    <property type="protein sequence ID" value="CAE85198.1"/>
    <property type="status" value="ALT_INIT"/>
    <property type="molecule type" value="Genomic_DNA"/>
</dbReference>
<dbReference type="EMBL" id="CP000247">
    <property type="protein sequence ID" value="ABG70993.1"/>
    <property type="molecule type" value="Genomic_DNA"/>
</dbReference>
<dbReference type="RefSeq" id="WP_001117568.1">
    <property type="nucleotide sequence ID" value="NC_008253.1"/>
</dbReference>
<dbReference type="SMR" id="Q0TDI6"/>
<dbReference type="KEGG" id="ecp:ECP_3010"/>
<dbReference type="HOGENOM" id="CLU_182912_1_0_6"/>
<dbReference type="Proteomes" id="UP000009182">
    <property type="component" value="Chromosome"/>
</dbReference>
<dbReference type="Gene3D" id="3.30.160.130">
    <property type="entry name" value="ykff protein like domains"/>
    <property type="match status" value="1"/>
</dbReference>
<dbReference type="InterPro" id="IPR009253">
    <property type="entry name" value="DUF905"/>
</dbReference>
<dbReference type="InterPro" id="IPR038612">
    <property type="entry name" value="YkfF-like_sf"/>
</dbReference>
<dbReference type="Pfam" id="PF06006">
    <property type="entry name" value="DUF905"/>
    <property type="match status" value="1"/>
</dbReference>
<dbReference type="SUPFAM" id="SSF54786">
    <property type="entry name" value="YcfA/nrd intein domain"/>
    <property type="match status" value="1"/>
</dbReference>
<protein>
    <recommendedName>
        <fullName>UPF0401 protein ECP_3010</fullName>
    </recommendedName>
</protein>
<proteinExistence type="inferred from homology"/>
<gene>
    <name type="ordered locus">ECP_3010</name>
</gene>
<reference key="1">
    <citation type="journal article" date="2004" name="Infect. Immun.">
        <title>The pathogenicity island-associated K15 capsule determinant exhibits a novel genetic structure and correlates with virulence in uropathogenic Escherichia coli strain 536.</title>
        <authorList>
            <person name="Schneider G."/>
            <person name="Dobrindt U."/>
            <person name="Brueggemann H."/>
            <person name="Nagy G."/>
            <person name="Janke B."/>
            <person name="Blum-Oehler G."/>
            <person name="Buchrieser C."/>
            <person name="Gottschalk G."/>
            <person name="Emoedy L."/>
            <person name="Hacker J."/>
        </authorList>
    </citation>
    <scope>NUCLEOTIDE SEQUENCE [GENOMIC DNA]</scope>
</reference>
<reference key="2">
    <citation type="journal article" date="2006" name="Mol. Microbiol.">
        <title>Role of pathogenicity island-associated integrases in the genome plasticity of uropathogenic Escherichia coli strain 536.</title>
        <authorList>
            <person name="Hochhut B."/>
            <person name="Wilde C."/>
            <person name="Balling G."/>
            <person name="Middendorf B."/>
            <person name="Dobrindt U."/>
            <person name="Brzuszkiewicz E."/>
            <person name="Gottschalk G."/>
            <person name="Carniel E."/>
            <person name="Hacker J."/>
        </authorList>
    </citation>
    <scope>NUCLEOTIDE SEQUENCE [LARGE SCALE GENOMIC DNA]</scope>
    <source>
        <strain>536 / UPEC</strain>
    </source>
</reference>
<sequence length="77" mass="8745">MPGCTSRLLPEGPFSRNQALAVTTAYLNVLIEDDQGTHFRLVIRNAEGQLRWRCWNFEPDAGKQLNPYLASEGILRQ</sequence>
<evidence type="ECO:0000305" key="1"/>